<keyword id="KW-0143">Chaperone</keyword>
<keyword id="KW-0963">Cytoplasm</keyword>
<keyword id="KW-0235">DNA replication</keyword>
<keyword id="KW-0479">Metal-binding</keyword>
<keyword id="KW-1185">Reference proteome</keyword>
<keyword id="KW-0677">Repeat</keyword>
<keyword id="KW-0346">Stress response</keyword>
<keyword id="KW-0862">Zinc</keyword>
<keyword id="KW-0863">Zinc-finger</keyword>
<sequence length="378" mass="40570">MADFYDTLGVNRNADADSLKRAYRRLARQYHPDINKEAGAEERFKEIGRAYEVLGDPEKRARYDQFGEAGLGGSAGMPDMGDMGGFADIFETFFSGFGGPGSSGARTQRRGPQQGDDLRYDLTIDFNQAVFGQEREIKIPHLETCDVCRGTGAKPGTGPTTCSTCGGAGQVRRATRTPFGSFTQVSDCPTCSGSGQVISDSCQSCGGQGVKQVRKKLRINIPAGVDTGTRLRVSGEGNAGPRGGPSGDLYVFLKVKSHARLKRDGLNIHSEVNVSYLQAILGDTIEVDTVDGPTTLQIPSGTQPSAVLILDNKGIPKLGNPVARGNHCISVNIKIPSRLTDDEKILLEKLAIYYSAKGPQNHHHNSGLFSRLFKSNAS</sequence>
<comment type="function">
    <text evidence="1">Participates actively in the response to hyperosmotic and heat shock by preventing the aggregation of stress-denatured proteins and by disaggregating proteins, also in an autonomous, DnaK-independent fashion. Unfolded proteins bind initially to DnaJ; upon interaction with the DnaJ-bound protein, DnaK hydrolyzes its bound ATP, resulting in the formation of a stable complex. GrpE releases ADP from DnaK; ATP binding to DnaK triggers the release of the substrate protein, thus completing the reaction cycle. Several rounds of ATP-dependent interactions between DnaJ, DnaK and GrpE are required for fully efficient folding. Also involved, together with DnaK and GrpE, in the DNA replication of plasmids through activation of initiation proteins.</text>
</comment>
<comment type="cofactor">
    <cofactor evidence="1">
        <name>Zn(2+)</name>
        <dbReference type="ChEBI" id="CHEBI:29105"/>
    </cofactor>
    <text evidence="1">Binds 2 Zn(2+) ions per monomer.</text>
</comment>
<comment type="subunit">
    <text evidence="1">Homodimer.</text>
</comment>
<comment type="subcellular location">
    <subcellularLocation>
        <location evidence="1">Cytoplasm</location>
    </subcellularLocation>
</comment>
<comment type="domain">
    <text evidence="1">The J domain is necessary and sufficient to stimulate DnaK ATPase activity. Zinc center 1 plays an important role in the autonomous, DnaK-independent chaperone activity of DnaJ. Zinc center 2 is essential for interaction with DnaK and for DnaJ activity.</text>
</comment>
<comment type="similarity">
    <text evidence="1">Belongs to the DnaJ family.</text>
</comment>
<reference key="1">
    <citation type="journal article" date="2003" name="Proc. Natl. Acad. Sci. U.S.A.">
        <title>Genome sequence of the cyanobacterium Prochlorococcus marinus SS120, a nearly minimal oxyphototrophic genome.</title>
        <authorList>
            <person name="Dufresne A."/>
            <person name="Salanoubat M."/>
            <person name="Partensky F."/>
            <person name="Artiguenave F."/>
            <person name="Axmann I.M."/>
            <person name="Barbe V."/>
            <person name="Duprat S."/>
            <person name="Galperin M.Y."/>
            <person name="Koonin E.V."/>
            <person name="Le Gall F."/>
            <person name="Makarova K.S."/>
            <person name="Ostrowski M."/>
            <person name="Oztas S."/>
            <person name="Robert C."/>
            <person name="Rogozin I.B."/>
            <person name="Scanlan D.J."/>
            <person name="Tandeau de Marsac N."/>
            <person name="Weissenbach J."/>
            <person name="Wincker P."/>
            <person name="Wolf Y.I."/>
            <person name="Hess W.R."/>
        </authorList>
    </citation>
    <scope>NUCLEOTIDE SEQUENCE [LARGE SCALE GENOMIC DNA]</scope>
    <source>
        <strain>SARG / CCMP1375 / SS120</strain>
    </source>
</reference>
<organism>
    <name type="scientific">Prochlorococcus marinus (strain SARG / CCMP1375 / SS120)</name>
    <dbReference type="NCBI Taxonomy" id="167539"/>
    <lineage>
        <taxon>Bacteria</taxon>
        <taxon>Bacillati</taxon>
        <taxon>Cyanobacteriota</taxon>
        <taxon>Cyanophyceae</taxon>
        <taxon>Synechococcales</taxon>
        <taxon>Prochlorococcaceae</taxon>
        <taxon>Prochlorococcus</taxon>
    </lineage>
</organism>
<dbReference type="EMBL" id="AE017126">
    <property type="protein sequence ID" value="AAP99063.1"/>
    <property type="molecule type" value="Genomic_DNA"/>
</dbReference>
<dbReference type="RefSeq" id="NP_874411.1">
    <property type="nucleotide sequence ID" value="NC_005042.1"/>
</dbReference>
<dbReference type="RefSeq" id="WP_011124172.1">
    <property type="nucleotide sequence ID" value="NC_005042.1"/>
</dbReference>
<dbReference type="SMR" id="Q7VEJ6"/>
<dbReference type="STRING" id="167539.Pro_0017"/>
<dbReference type="EnsemblBacteria" id="AAP99063">
    <property type="protein sequence ID" value="AAP99063"/>
    <property type="gene ID" value="Pro_0017"/>
</dbReference>
<dbReference type="KEGG" id="pma:Pro_0017"/>
<dbReference type="PATRIC" id="fig|167539.5.peg.17"/>
<dbReference type="eggNOG" id="COG0484">
    <property type="taxonomic scope" value="Bacteria"/>
</dbReference>
<dbReference type="HOGENOM" id="CLU_017633_0_1_3"/>
<dbReference type="OrthoDB" id="9779889at2"/>
<dbReference type="Proteomes" id="UP000001420">
    <property type="component" value="Chromosome"/>
</dbReference>
<dbReference type="GO" id="GO:0005737">
    <property type="term" value="C:cytoplasm"/>
    <property type="evidence" value="ECO:0007669"/>
    <property type="project" value="UniProtKB-SubCell"/>
</dbReference>
<dbReference type="GO" id="GO:0005524">
    <property type="term" value="F:ATP binding"/>
    <property type="evidence" value="ECO:0007669"/>
    <property type="project" value="InterPro"/>
</dbReference>
<dbReference type="GO" id="GO:0031072">
    <property type="term" value="F:heat shock protein binding"/>
    <property type="evidence" value="ECO:0007669"/>
    <property type="project" value="InterPro"/>
</dbReference>
<dbReference type="GO" id="GO:0051082">
    <property type="term" value="F:unfolded protein binding"/>
    <property type="evidence" value="ECO:0007669"/>
    <property type="project" value="UniProtKB-UniRule"/>
</dbReference>
<dbReference type="GO" id="GO:0008270">
    <property type="term" value="F:zinc ion binding"/>
    <property type="evidence" value="ECO:0007669"/>
    <property type="project" value="UniProtKB-UniRule"/>
</dbReference>
<dbReference type="GO" id="GO:0051085">
    <property type="term" value="P:chaperone cofactor-dependent protein refolding"/>
    <property type="evidence" value="ECO:0007669"/>
    <property type="project" value="TreeGrafter"/>
</dbReference>
<dbReference type="GO" id="GO:0006260">
    <property type="term" value="P:DNA replication"/>
    <property type="evidence" value="ECO:0007669"/>
    <property type="project" value="UniProtKB-KW"/>
</dbReference>
<dbReference type="GO" id="GO:0042026">
    <property type="term" value="P:protein refolding"/>
    <property type="evidence" value="ECO:0007669"/>
    <property type="project" value="TreeGrafter"/>
</dbReference>
<dbReference type="GO" id="GO:0009408">
    <property type="term" value="P:response to heat"/>
    <property type="evidence" value="ECO:0007669"/>
    <property type="project" value="InterPro"/>
</dbReference>
<dbReference type="CDD" id="cd06257">
    <property type="entry name" value="DnaJ"/>
    <property type="match status" value="1"/>
</dbReference>
<dbReference type="CDD" id="cd10747">
    <property type="entry name" value="DnaJ_C"/>
    <property type="match status" value="1"/>
</dbReference>
<dbReference type="CDD" id="cd10719">
    <property type="entry name" value="DnaJ_zf"/>
    <property type="match status" value="1"/>
</dbReference>
<dbReference type="FunFam" id="2.60.260.20:FF:000005">
    <property type="entry name" value="Chaperone protein dnaJ 1, mitochondrial"/>
    <property type="match status" value="1"/>
</dbReference>
<dbReference type="FunFam" id="2.10.230.10:FF:000002">
    <property type="entry name" value="Molecular chaperone DnaJ"/>
    <property type="match status" value="1"/>
</dbReference>
<dbReference type="Gene3D" id="1.10.287.110">
    <property type="entry name" value="DnaJ domain"/>
    <property type="match status" value="1"/>
</dbReference>
<dbReference type="Gene3D" id="2.10.230.10">
    <property type="entry name" value="Heat shock protein DnaJ, cysteine-rich domain"/>
    <property type="match status" value="1"/>
</dbReference>
<dbReference type="Gene3D" id="2.60.260.20">
    <property type="entry name" value="Urease metallochaperone UreE, N-terminal domain"/>
    <property type="match status" value="2"/>
</dbReference>
<dbReference type="HAMAP" id="MF_01152">
    <property type="entry name" value="DnaJ"/>
    <property type="match status" value="1"/>
</dbReference>
<dbReference type="InterPro" id="IPR012724">
    <property type="entry name" value="DnaJ"/>
</dbReference>
<dbReference type="InterPro" id="IPR002939">
    <property type="entry name" value="DnaJ_C"/>
</dbReference>
<dbReference type="InterPro" id="IPR001623">
    <property type="entry name" value="DnaJ_domain"/>
</dbReference>
<dbReference type="InterPro" id="IPR018253">
    <property type="entry name" value="DnaJ_domain_CS"/>
</dbReference>
<dbReference type="InterPro" id="IPR008971">
    <property type="entry name" value="HSP40/DnaJ_pept-bd"/>
</dbReference>
<dbReference type="InterPro" id="IPR001305">
    <property type="entry name" value="HSP_DnaJ_Cys-rich_dom"/>
</dbReference>
<dbReference type="InterPro" id="IPR036410">
    <property type="entry name" value="HSP_DnaJ_Cys-rich_dom_sf"/>
</dbReference>
<dbReference type="InterPro" id="IPR036869">
    <property type="entry name" value="J_dom_sf"/>
</dbReference>
<dbReference type="NCBIfam" id="TIGR02349">
    <property type="entry name" value="DnaJ_bact"/>
    <property type="match status" value="1"/>
</dbReference>
<dbReference type="NCBIfam" id="NF008035">
    <property type="entry name" value="PRK10767.1"/>
    <property type="match status" value="1"/>
</dbReference>
<dbReference type="NCBIfam" id="NF010886">
    <property type="entry name" value="PRK14293.1"/>
    <property type="match status" value="1"/>
</dbReference>
<dbReference type="PANTHER" id="PTHR43096:SF10">
    <property type="entry name" value="CHAPERONE PROTEIN DNAJ A6, CHLOROPLASTIC"/>
    <property type="match status" value="1"/>
</dbReference>
<dbReference type="PANTHER" id="PTHR43096">
    <property type="entry name" value="DNAJ HOMOLOG 1, MITOCHONDRIAL-RELATED"/>
    <property type="match status" value="1"/>
</dbReference>
<dbReference type="Pfam" id="PF00226">
    <property type="entry name" value="DnaJ"/>
    <property type="match status" value="1"/>
</dbReference>
<dbReference type="Pfam" id="PF01556">
    <property type="entry name" value="DnaJ_C"/>
    <property type="match status" value="1"/>
</dbReference>
<dbReference type="Pfam" id="PF00684">
    <property type="entry name" value="DnaJ_CXXCXGXG"/>
    <property type="match status" value="1"/>
</dbReference>
<dbReference type="PRINTS" id="PR00625">
    <property type="entry name" value="JDOMAIN"/>
</dbReference>
<dbReference type="SMART" id="SM00271">
    <property type="entry name" value="DnaJ"/>
    <property type="match status" value="1"/>
</dbReference>
<dbReference type="SUPFAM" id="SSF46565">
    <property type="entry name" value="Chaperone J-domain"/>
    <property type="match status" value="1"/>
</dbReference>
<dbReference type="SUPFAM" id="SSF57938">
    <property type="entry name" value="DnaJ/Hsp40 cysteine-rich domain"/>
    <property type="match status" value="1"/>
</dbReference>
<dbReference type="SUPFAM" id="SSF49493">
    <property type="entry name" value="HSP40/DnaJ peptide-binding domain"/>
    <property type="match status" value="2"/>
</dbReference>
<dbReference type="PROSITE" id="PS00636">
    <property type="entry name" value="DNAJ_1"/>
    <property type="match status" value="1"/>
</dbReference>
<dbReference type="PROSITE" id="PS50076">
    <property type="entry name" value="DNAJ_2"/>
    <property type="match status" value="1"/>
</dbReference>
<dbReference type="PROSITE" id="PS51188">
    <property type="entry name" value="ZF_CR"/>
    <property type="match status" value="1"/>
</dbReference>
<proteinExistence type="inferred from homology"/>
<gene>
    <name evidence="1" type="primary">dnaJ</name>
    <name type="ordered locus">Pro_0017</name>
</gene>
<evidence type="ECO:0000255" key="1">
    <source>
        <dbReference type="HAMAP-Rule" id="MF_01152"/>
    </source>
</evidence>
<protein>
    <recommendedName>
        <fullName evidence="1">Chaperone protein DnaJ</fullName>
    </recommendedName>
</protein>
<accession>Q7VEJ6</accession>
<name>DNAJ_PROMA</name>
<feature type="chain" id="PRO_0000070855" description="Chaperone protein DnaJ">
    <location>
        <begin position="1"/>
        <end position="378"/>
    </location>
</feature>
<feature type="domain" description="J" evidence="1">
    <location>
        <begin position="3"/>
        <end position="67"/>
    </location>
</feature>
<feature type="repeat" description="CXXCXGXG motif">
    <location>
        <begin position="145"/>
        <end position="152"/>
    </location>
</feature>
<feature type="repeat" description="CXXCXGXG motif">
    <location>
        <begin position="162"/>
        <end position="169"/>
    </location>
</feature>
<feature type="repeat" description="CXXCXGXG motif">
    <location>
        <begin position="188"/>
        <end position="195"/>
    </location>
</feature>
<feature type="repeat" description="CXXCXGXG motif">
    <location>
        <begin position="202"/>
        <end position="209"/>
    </location>
</feature>
<feature type="zinc finger region" description="CR-type" evidence="1">
    <location>
        <begin position="132"/>
        <end position="214"/>
    </location>
</feature>
<feature type="binding site" evidence="1">
    <location>
        <position position="145"/>
    </location>
    <ligand>
        <name>Zn(2+)</name>
        <dbReference type="ChEBI" id="CHEBI:29105"/>
        <label>1</label>
    </ligand>
</feature>
<feature type="binding site" evidence="1">
    <location>
        <position position="148"/>
    </location>
    <ligand>
        <name>Zn(2+)</name>
        <dbReference type="ChEBI" id="CHEBI:29105"/>
        <label>1</label>
    </ligand>
</feature>
<feature type="binding site" evidence="1">
    <location>
        <position position="162"/>
    </location>
    <ligand>
        <name>Zn(2+)</name>
        <dbReference type="ChEBI" id="CHEBI:29105"/>
        <label>2</label>
    </ligand>
</feature>
<feature type="binding site" evidence="1">
    <location>
        <position position="165"/>
    </location>
    <ligand>
        <name>Zn(2+)</name>
        <dbReference type="ChEBI" id="CHEBI:29105"/>
        <label>2</label>
    </ligand>
</feature>
<feature type="binding site" evidence="1">
    <location>
        <position position="188"/>
    </location>
    <ligand>
        <name>Zn(2+)</name>
        <dbReference type="ChEBI" id="CHEBI:29105"/>
        <label>2</label>
    </ligand>
</feature>
<feature type="binding site" evidence="1">
    <location>
        <position position="191"/>
    </location>
    <ligand>
        <name>Zn(2+)</name>
        <dbReference type="ChEBI" id="CHEBI:29105"/>
        <label>2</label>
    </ligand>
</feature>
<feature type="binding site" evidence="1">
    <location>
        <position position="202"/>
    </location>
    <ligand>
        <name>Zn(2+)</name>
        <dbReference type="ChEBI" id="CHEBI:29105"/>
        <label>1</label>
    </ligand>
</feature>
<feature type="binding site" evidence="1">
    <location>
        <position position="205"/>
    </location>
    <ligand>
        <name>Zn(2+)</name>
        <dbReference type="ChEBI" id="CHEBI:29105"/>
        <label>1</label>
    </ligand>
</feature>